<accession>B7NE40</accession>
<name>GLGC_ECOLU</name>
<reference key="1">
    <citation type="journal article" date="2009" name="PLoS Genet.">
        <title>Organised genome dynamics in the Escherichia coli species results in highly diverse adaptive paths.</title>
        <authorList>
            <person name="Touchon M."/>
            <person name="Hoede C."/>
            <person name="Tenaillon O."/>
            <person name="Barbe V."/>
            <person name="Baeriswyl S."/>
            <person name="Bidet P."/>
            <person name="Bingen E."/>
            <person name="Bonacorsi S."/>
            <person name="Bouchier C."/>
            <person name="Bouvet O."/>
            <person name="Calteau A."/>
            <person name="Chiapello H."/>
            <person name="Clermont O."/>
            <person name="Cruveiller S."/>
            <person name="Danchin A."/>
            <person name="Diard M."/>
            <person name="Dossat C."/>
            <person name="Karoui M.E."/>
            <person name="Frapy E."/>
            <person name="Garry L."/>
            <person name="Ghigo J.M."/>
            <person name="Gilles A.M."/>
            <person name="Johnson J."/>
            <person name="Le Bouguenec C."/>
            <person name="Lescat M."/>
            <person name="Mangenot S."/>
            <person name="Martinez-Jehanne V."/>
            <person name="Matic I."/>
            <person name="Nassif X."/>
            <person name="Oztas S."/>
            <person name="Petit M.A."/>
            <person name="Pichon C."/>
            <person name="Rouy Z."/>
            <person name="Ruf C.S."/>
            <person name="Schneider D."/>
            <person name="Tourret J."/>
            <person name="Vacherie B."/>
            <person name="Vallenet D."/>
            <person name="Medigue C."/>
            <person name="Rocha E.P.C."/>
            <person name="Denamur E."/>
        </authorList>
    </citation>
    <scope>NUCLEOTIDE SEQUENCE [LARGE SCALE GENOMIC DNA]</scope>
    <source>
        <strain>UMN026 / ExPEC</strain>
    </source>
</reference>
<proteinExistence type="inferred from homology"/>
<sequence>MVSLEKNDHLMLARQLPLKSVALILAGGRGTRLKDLTNKRAKPAVHFGGKFRIIDFALSNCINSGIRRMGVITQYQSHTLVQHIQRGWSFFNEEMNEFVDLLPAQQRMKGENWYRGTADAVTQNLDIIRRYKAEYVVILAGDHIYKQDYSRMLIDHVEKGARCTVACMPVPIEEASAFGVMAVDENDKIIEFVEKPANPPSMPNDPSKSLASMGIYVFDADYLYELLEEDDRDENSSHDFGKDLIPKITEAGLAYAHPFPLSCVQSDPDAEPYWRDVGTLEAYWKANLDLASVVPELDMYDRNWPIRTYNESLPPAKFVQDRSGSHGMTLNSLVSGGCVISGSVVVQSVLFSRVRVNSFCNIDSAVLLPEVWVGRSCRLRRCVIDRACVIPEGMVIGENAEEDARRFYRSEEGIVLVTREMLRKLGHKQER</sequence>
<keyword id="KW-0021">Allosteric enzyme</keyword>
<keyword id="KW-0067">ATP-binding</keyword>
<keyword id="KW-0119">Carbohydrate metabolism</keyword>
<keyword id="KW-0320">Glycogen biosynthesis</keyword>
<keyword id="KW-0321">Glycogen metabolism</keyword>
<keyword id="KW-0547">Nucleotide-binding</keyword>
<keyword id="KW-0548">Nucleotidyltransferase</keyword>
<keyword id="KW-0808">Transferase</keyword>
<dbReference type="EC" id="2.7.7.27" evidence="1"/>
<dbReference type="EMBL" id="CU928163">
    <property type="protein sequence ID" value="CAR15040.1"/>
    <property type="molecule type" value="Genomic_DNA"/>
</dbReference>
<dbReference type="RefSeq" id="WP_000253975.1">
    <property type="nucleotide sequence ID" value="NC_011751.1"/>
</dbReference>
<dbReference type="RefSeq" id="YP_002414545.1">
    <property type="nucleotide sequence ID" value="NC_011751.1"/>
</dbReference>
<dbReference type="SMR" id="B7NE40"/>
<dbReference type="STRING" id="585056.ECUMN_3894"/>
<dbReference type="GeneID" id="93778559"/>
<dbReference type="KEGG" id="eum:ECUMN_3894"/>
<dbReference type="PATRIC" id="fig|585056.7.peg.4068"/>
<dbReference type="HOGENOM" id="CLU_029499_14_1_6"/>
<dbReference type="UniPathway" id="UPA00164"/>
<dbReference type="Proteomes" id="UP000007097">
    <property type="component" value="Chromosome"/>
</dbReference>
<dbReference type="GO" id="GO:0005524">
    <property type="term" value="F:ATP binding"/>
    <property type="evidence" value="ECO:0007669"/>
    <property type="project" value="UniProtKB-KW"/>
</dbReference>
<dbReference type="GO" id="GO:0008878">
    <property type="term" value="F:glucose-1-phosphate adenylyltransferase activity"/>
    <property type="evidence" value="ECO:0007669"/>
    <property type="project" value="UniProtKB-UniRule"/>
</dbReference>
<dbReference type="GO" id="GO:0005978">
    <property type="term" value="P:glycogen biosynthetic process"/>
    <property type="evidence" value="ECO:0007669"/>
    <property type="project" value="UniProtKB-UniRule"/>
</dbReference>
<dbReference type="CDD" id="cd02508">
    <property type="entry name" value="ADP_Glucose_PP"/>
    <property type="match status" value="1"/>
</dbReference>
<dbReference type="CDD" id="cd04651">
    <property type="entry name" value="LbH_G1P_AT_C"/>
    <property type="match status" value="1"/>
</dbReference>
<dbReference type="FunFam" id="2.160.10.10:FF:000006">
    <property type="entry name" value="Glucose-1-phosphate adenylyltransferase"/>
    <property type="match status" value="1"/>
</dbReference>
<dbReference type="FunFam" id="3.90.550.10:FF:000014">
    <property type="entry name" value="Glucose-1-phosphate adenylyltransferase"/>
    <property type="match status" value="1"/>
</dbReference>
<dbReference type="Gene3D" id="2.160.10.10">
    <property type="entry name" value="Hexapeptide repeat proteins"/>
    <property type="match status" value="1"/>
</dbReference>
<dbReference type="Gene3D" id="3.90.550.10">
    <property type="entry name" value="Spore Coat Polysaccharide Biosynthesis Protein SpsA, Chain A"/>
    <property type="match status" value="1"/>
</dbReference>
<dbReference type="HAMAP" id="MF_00624">
    <property type="entry name" value="GlgC"/>
    <property type="match status" value="1"/>
</dbReference>
<dbReference type="InterPro" id="IPR011831">
    <property type="entry name" value="ADP-Glc_PPase"/>
</dbReference>
<dbReference type="InterPro" id="IPR005836">
    <property type="entry name" value="ADP_Glu_pyroP_CS"/>
</dbReference>
<dbReference type="InterPro" id="IPR023049">
    <property type="entry name" value="GlgC_bac"/>
</dbReference>
<dbReference type="InterPro" id="IPR056818">
    <property type="entry name" value="GlmU/GlgC-like_hexapep"/>
</dbReference>
<dbReference type="InterPro" id="IPR005835">
    <property type="entry name" value="NTP_transferase_dom"/>
</dbReference>
<dbReference type="InterPro" id="IPR029044">
    <property type="entry name" value="Nucleotide-diphossugar_trans"/>
</dbReference>
<dbReference type="InterPro" id="IPR011004">
    <property type="entry name" value="Trimer_LpxA-like_sf"/>
</dbReference>
<dbReference type="NCBIfam" id="TIGR02091">
    <property type="entry name" value="glgC"/>
    <property type="match status" value="1"/>
</dbReference>
<dbReference type="NCBIfam" id="NF001947">
    <property type="entry name" value="PRK00725.1"/>
    <property type="match status" value="1"/>
</dbReference>
<dbReference type="NCBIfam" id="NF002023">
    <property type="entry name" value="PRK00844.1"/>
    <property type="match status" value="1"/>
</dbReference>
<dbReference type="PANTHER" id="PTHR43523:SF2">
    <property type="entry name" value="GLUCOSE-1-PHOSPHATE ADENYLYLTRANSFERASE"/>
    <property type="match status" value="1"/>
</dbReference>
<dbReference type="PANTHER" id="PTHR43523">
    <property type="entry name" value="GLUCOSE-1-PHOSPHATE ADENYLYLTRANSFERASE-RELATED"/>
    <property type="match status" value="1"/>
</dbReference>
<dbReference type="Pfam" id="PF24894">
    <property type="entry name" value="Hexapep_GlmU"/>
    <property type="match status" value="1"/>
</dbReference>
<dbReference type="Pfam" id="PF00483">
    <property type="entry name" value="NTP_transferase"/>
    <property type="match status" value="1"/>
</dbReference>
<dbReference type="SUPFAM" id="SSF53448">
    <property type="entry name" value="Nucleotide-diphospho-sugar transferases"/>
    <property type="match status" value="1"/>
</dbReference>
<dbReference type="SUPFAM" id="SSF51161">
    <property type="entry name" value="Trimeric LpxA-like enzymes"/>
    <property type="match status" value="1"/>
</dbReference>
<dbReference type="PROSITE" id="PS00808">
    <property type="entry name" value="ADP_GLC_PYROPHOSPH_1"/>
    <property type="match status" value="1"/>
</dbReference>
<dbReference type="PROSITE" id="PS00809">
    <property type="entry name" value="ADP_GLC_PYROPHOSPH_2"/>
    <property type="match status" value="1"/>
</dbReference>
<dbReference type="PROSITE" id="PS00810">
    <property type="entry name" value="ADP_GLC_PYROPHOSPH_3"/>
    <property type="match status" value="1"/>
</dbReference>
<feature type="chain" id="PRO_1000130480" description="Glucose-1-phosphate adenylyltransferase">
    <location>
        <begin position="1"/>
        <end position="431"/>
    </location>
</feature>
<feature type="binding site" evidence="1">
    <location>
        <position position="39"/>
    </location>
    <ligand>
        <name>beta-D-fructose 1,6-bisphosphate</name>
        <dbReference type="ChEBI" id="CHEBI:32966"/>
    </ligand>
</feature>
<feature type="binding site" evidence="1">
    <location>
        <position position="40"/>
    </location>
    <ligand>
        <name>AMP</name>
        <dbReference type="ChEBI" id="CHEBI:456215"/>
    </ligand>
</feature>
<feature type="binding site" evidence="1">
    <location>
        <position position="46"/>
    </location>
    <ligand>
        <name>AMP</name>
        <dbReference type="ChEBI" id="CHEBI:456215"/>
    </ligand>
</feature>
<feature type="binding site" evidence="1">
    <location>
        <position position="52"/>
    </location>
    <ligand>
        <name>AMP</name>
        <dbReference type="ChEBI" id="CHEBI:456215"/>
    </ligand>
</feature>
<feature type="binding site" evidence="1">
    <location>
        <position position="114"/>
    </location>
    <ligand>
        <name>alpha-D-glucose 1-phosphate</name>
        <dbReference type="ChEBI" id="CHEBI:58601"/>
    </ligand>
</feature>
<feature type="binding site" evidence="1">
    <location>
        <position position="130"/>
    </location>
    <ligand>
        <name>AMP</name>
        <dbReference type="ChEBI" id="CHEBI:456215"/>
    </ligand>
</feature>
<feature type="binding site" evidence="1">
    <location>
        <position position="179"/>
    </location>
    <ligand>
        <name>alpha-D-glucose 1-phosphate</name>
        <dbReference type="ChEBI" id="CHEBI:58601"/>
    </ligand>
</feature>
<feature type="binding site" evidence="1">
    <location>
        <begin position="194"/>
        <end position="195"/>
    </location>
    <ligand>
        <name>alpha-D-glucose 1-phosphate</name>
        <dbReference type="ChEBI" id="CHEBI:58601"/>
    </ligand>
</feature>
<feature type="binding site" evidence="1">
    <location>
        <position position="212"/>
    </location>
    <ligand>
        <name>alpha-D-glucose 1-phosphate</name>
        <dbReference type="ChEBI" id="CHEBI:58601"/>
    </ligand>
</feature>
<feature type="binding site" evidence="1">
    <location>
        <position position="370"/>
    </location>
    <ligand>
        <name>AMP</name>
        <dbReference type="ChEBI" id="CHEBI:456215"/>
    </ligand>
</feature>
<feature type="binding site" evidence="1">
    <location>
        <position position="386"/>
    </location>
    <ligand>
        <name>AMP</name>
        <dbReference type="ChEBI" id="CHEBI:456215"/>
    </ligand>
</feature>
<feature type="binding site" evidence="1">
    <location>
        <begin position="419"/>
        <end position="423"/>
    </location>
    <ligand>
        <name>beta-D-fructose 1,6-bisphosphate</name>
        <dbReference type="ChEBI" id="CHEBI:32966"/>
    </ligand>
</feature>
<feature type="binding site" evidence="1">
    <location>
        <begin position="429"/>
        <end position="431"/>
    </location>
    <ligand>
        <name>beta-D-fructose 1,6-bisphosphate</name>
        <dbReference type="ChEBI" id="CHEBI:32966"/>
    </ligand>
</feature>
<feature type="site" description="Could play a key role in the communication between the regulatory and the substrate sites" evidence="1">
    <location>
        <position position="74"/>
    </location>
</feature>
<feature type="site" description="Could play a key role in the communication between the regulatory and the substrate sites" evidence="1">
    <location>
        <position position="113"/>
    </location>
</feature>
<comment type="function">
    <text evidence="1">Involved in the biosynthesis of ADP-glucose, a building block required for the elongation reactions to produce glycogen. Catalyzes the reaction between ATP and alpha-D-glucose 1-phosphate (G1P) to produce pyrophosphate and ADP-Glc.</text>
</comment>
<comment type="catalytic activity">
    <reaction evidence="1">
        <text>alpha-D-glucose 1-phosphate + ATP + H(+) = ADP-alpha-D-glucose + diphosphate</text>
        <dbReference type="Rhea" id="RHEA:12120"/>
        <dbReference type="ChEBI" id="CHEBI:15378"/>
        <dbReference type="ChEBI" id="CHEBI:30616"/>
        <dbReference type="ChEBI" id="CHEBI:33019"/>
        <dbReference type="ChEBI" id="CHEBI:57498"/>
        <dbReference type="ChEBI" id="CHEBI:58601"/>
        <dbReference type="EC" id="2.7.7.27"/>
    </reaction>
</comment>
<comment type="activity regulation">
    <text evidence="1">Allosterically activated by fructose-1,6-bisphosphate (F16BP) and inhibited by AMP.</text>
</comment>
<comment type="pathway">
    <text evidence="1">Glycan biosynthesis; glycogen biosynthesis.</text>
</comment>
<comment type="subunit">
    <text evidence="1">Homotetramer.</text>
</comment>
<comment type="similarity">
    <text evidence="1">Belongs to the bacterial/plant glucose-1-phosphate adenylyltransferase family.</text>
</comment>
<evidence type="ECO:0000255" key="1">
    <source>
        <dbReference type="HAMAP-Rule" id="MF_00624"/>
    </source>
</evidence>
<gene>
    <name evidence="1" type="primary">glgC</name>
    <name type="ordered locus">ECUMN_3894</name>
</gene>
<organism>
    <name type="scientific">Escherichia coli O17:K52:H18 (strain UMN026 / ExPEC)</name>
    <dbReference type="NCBI Taxonomy" id="585056"/>
    <lineage>
        <taxon>Bacteria</taxon>
        <taxon>Pseudomonadati</taxon>
        <taxon>Pseudomonadota</taxon>
        <taxon>Gammaproteobacteria</taxon>
        <taxon>Enterobacterales</taxon>
        <taxon>Enterobacteriaceae</taxon>
        <taxon>Escherichia</taxon>
    </lineage>
</organism>
<protein>
    <recommendedName>
        <fullName evidence="1">Glucose-1-phosphate adenylyltransferase</fullName>
        <ecNumber evidence="1">2.7.7.27</ecNumber>
    </recommendedName>
    <alternativeName>
        <fullName evidence="1">ADP-glucose pyrophosphorylase</fullName>
        <shortName evidence="1">ADPGlc PPase</shortName>
    </alternativeName>
    <alternativeName>
        <fullName evidence="1">ADP-glucose synthase</fullName>
    </alternativeName>
</protein>